<reference key="1">
    <citation type="journal article" date="2006" name="J. Bacteriol.">
        <title>Comparison of the genome sequence of the poultry pathogen Bordetella avium with those of B. bronchiseptica, B. pertussis, and B. parapertussis reveals extensive diversity in surface structures associated with host interaction.</title>
        <authorList>
            <person name="Sebaihia M."/>
            <person name="Preston A."/>
            <person name="Maskell D.J."/>
            <person name="Kuzmiak H."/>
            <person name="Connell T.D."/>
            <person name="King N.D."/>
            <person name="Orndorff P.E."/>
            <person name="Miyamoto D.M."/>
            <person name="Thomson N.R."/>
            <person name="Harris D."/>
            <person name="Goble A."/>
            <person name="Lord A."/>
            <person name="Murphy L."/>
            <person name="Quail M.A."/>
            <person name="Rutter S."/>
            <person name="Squares R."/>
            <person name="Squares S."/>
            <person name="Woodward J."/>
            <person name="Parkhill J."/>
            <person name="Temple L.M."/>
        </authorList>
    </citation>
    <scope>NUCLEOTIDE SEQUENCE [LARGE SCALE GENOMIC DNA]</scope>
    <source>
        <strain>197N</strain>
    </source>
</reference>
<accession>Q2KUE4</accession>
<dbReference type="EC" id="2.4.2.7" evidence="1"/>
<dbReference type="EMBL" id="AM167904">
    <property type="protein sequence ID" value="CAJ50716.1"/>
    <property type="molecule type" value="Genomic_DNA"/>
</dbReference>
<dbReference type="RefSeq" id="WP_012418744.1">
    <property type="nucleotide sequence ID" value="NC_010645.1"/>
</dbReference>
<dbReference type="SMR" id="Q2KUE4"/>
<dbReference type="STRING" id="360910.BAV3106"/>
<dbReference type="GeneID" id="92933637"/>
<dbReference type="KEGG" id="bav:BAV3106"/>
<dbReference type="eggNOG" id="COG0503">
    <property type="taxonomic scope" value="Bacteria"/>
</dbReference>
<dbReference type="HOGENOM" id="CLU_063339_3_0_4"/>
<dbReference type="OrthoDB" id="9803963at2"/>
<dbReference type="UniPathway" id="UPA00588">
    <property type="reaction ID" value="UER00646"/>
</dbReference>
<dbReference type="Proteomes" id="UP000001977">
    <property type="component" value="Chromosome"/>
</dbReference>
<dbReference type="GO" id="GO:0005737">
    <property type="term" value="C:cytoplasm"/>
    <property type="evidence" value="ECO:0007669"/>
    <property type="project" value="UniProtKB-SubCell"/>
</dbReference>
<dbReference type="GO" id="GO:0002055">
    <property type="term" value="F:adenine binding"/>
    <property type="evidence" value="ECO:0007669"/>
    <property type="project" value="TreeGrafter"/>
</dbReference>
<dbReference type="GO" id="GO:0003999">
    <property type="term" value="F:adenine phosphoribosyltransferase activity"/>
    <property type="evidence" value="ECO:0007669"/>
    <property type="project" value="UniProtKB-UniRule"/>
</dbReference>
<dbReference type="GO" id="GO:0016208">
    <property type="term" value="F:AMP binding"/>
    <property type="evidence" value="ECO:0007669"/>
    <property type="project" value="TreeGrafter"/>
</dbReference>
<dbReference type="GO" id="GO:0006168">
    <property type="term" value="P:adenine salvage"/>
    <property type="evidence" value="ECO:0007669"/>
    <property type="project" value="InterPro"/>
</dbReference>
<dbReference type="GO" id="GO:0044209">
    <property type="term" value="P:AMP salvage"/>
    <property type="evidence" value="ECO:0007669"/>
    <property type="project" value="UniProtKB-UniRule"/>
</dbReference>
<dbReference type="GO" id="GO:0006166">
    <property type="term" value="P:purine ribonucleoside salvage"/>
    <property type="evidence" value="ECO:0007669"/>
    <property type="project" value="UniProtKB-KW"/>
</dbReference>
<dbReference type="CDD" id="cd06223">
    <property type="entry name" value="PRTases_typeI"/>
    <property type="match status" value="1"/>
</dbReference>
<dbReference type="FunFam" id="3.40.50.2020:FF:000021">
    <property type="entry name" value="Adenine phosphoribosyltransferase"/>
    <property type="match status" value="1"/>
</dbReference>
<dbReference type="Gene3D" id="3.40.50.2020">
    <property type="match status" value="1"/>
</dbReference>
<dbReference type="HAMAP" id="MF_00004">
    <property type="entry name" value="Aden_phosphoribosyltr"/>
    <property type="match status" value="1"/>
</dbReference>
<dbReference type="InterPro" id="IPR005764">
    <property type="entry name" value="Ade_phspho_trans"/>
</dbReference>
<dbReference type="InterPro" id="IPR000836">
    <property type="entry name" value="PRibTrfase_dom"/>
</dbReference>
<dbReference type="InterPro" id="IPR029057">
    <property type="entry name" value="PRTase-like"/>
</dbReference>
<dbReference type="InterPro" id="IPR050054">
    <property type="entry name" value="UPRTase/APRTase"/>
</dbReference>
<dbReference type="NCBIfam" id="TIGR01090">
    <property type="entry name" value="apt"/>
    <property type="match status" value="1"/>
</dbReference>
<dbReference type="NCBIfam" id="NF002634">
    <property type="entry name" value="PRK02304.1-3"/>
    <property type="match status" value="1"/>
</dbReference>
<dbReference type="NCBIfam" id="NF002636">
    <property type="entry name" value="PRK02304.1-5"/>
    <property type="match status" value="1"/>
</dbReference>
<dbReference type="PANTHER" id="PTHR32315">
    <property type="entry name" value="ADENINE PHOSPHORIBOSYLTRANSFERASE"/>
    <property type="match status" value="1"/>
</dbReference>
<dbReference type="PANTHER" id="PTHR32315:SF3">
    <property type="entry name" value="ADENINE PHOSPHORIBOSYLTRANSFERASE"/>
    <property type="match status" value="1"/>
</dbReference>
<dbReference type="Pfam" id="PF00156">
    <property type="entry name" value="Pribosyltran"/>
    <property type="match status" value="1"/>
</dbReference>
<dbReference type="SUPFAM" id="SSF53271">
    <property type="entry name" value="PRTase-like"/>
    <property type="match status" value="1"/>
</dbReference>
<dbReference type="PROSITE" id="PS00103">
    <property type="entry name" value="PUR_PYR_PR_TRANSFER"/>
    <property type="match status" value="1"/>
</dbReference>
<proteinExistence type="inferred from homology"/>
<organism>
    <name type="scientific">Bordetella avium (strain 197N)</name>
    <dbReference type="NCBI Taxonomy" id="360910"/>
    <lineage>
        <taxon>Bacteria</taxon>
        <taxon>Pseudomonadati</taxon>
        <taxon>Pseudomonadota</taxon>
        <taxon>Betaproteobacteria</taxon>
        <taxon>Burkholderiales</taxon>
        <taxon>Alcaligenaceae</taxon>
        <taxon>Bordetella</taxon>
    </lineage>
</organism>
<evidence type="ECO:0000255" key="1">
    <source>
        <dbReference type="HAMAP-Rule" id="MF_00004"/>
    </source>
</evidence>
<name>APT_BORA1</name>
<gene>
    <name evidence="1" type="primary">apt</name>
    <name type="ordered locus">BAV3106</name>
</gene>
<comment type="function">
    <text evidence="1">Catalyzes a salvage reaction resulting in the formation of AMP, that is energically less costly than de novo synthesis.</text>
</comment>
<comment type="catalytic activity">
    <reaction evidence="1">
        <text>AMP + diphosphate = 5-phospho-alpha-D-ribose 1-diphosphate + adenine</text>
        <dbReference type="Rhea" id="RHEA:16609"/>
        <dbReference type="ChEBI" id="CHEBI:16708"/>
        <dbReference type="ChEBI" id="CHEBI:33019"/>
        <dbReference type="ChEBI" id="CHEBI:58017"/>
        <dbReference type="ChEBI" id="CHEBI:456215"/>
        <dbReference type="EC" id="2.4.2.7"/>
    </reaction>
</comment>
<comment type="pathway">
    <text evidence="1">Purine metabolism; AMP biosynthesis via salvage pathway; AMP from adenine: step 1/1.</text>
</comment>
<comment type="subunit">
    <text evidence="1">Homodimer.</text>
</comment>
<comment type="subcellular location">
    <subcellularLocation>
        <location evidence="1">Cytoplasm</location>
    </subcellularLocation>
</comment>
<comment type="similarity">
    <text evidence="1">Belongs to the purine/pyrimidine phosphoribosyltransferase family.</text>
</comment>
<keyword id="KW-0963">Cytoplasm</keyword>
<keyword id="KW-0328">Glycosyltransferase</keyword>
<keyword id="KW-0660">Purine salvage</keyword>
<keyword id="KW-1185">Reference proteome</keyword>
<keyword id="KW-0808">Transferase</keyword>
<sequence length="182" mass="20131">MQTDYAEVVRRTIRSVPDWPVPGVTFRDITPVLQDPRTFRALVDLFVYRYMRQRLDLVAGVDARGFILGSVLAYELNLGFVPVRKKGKLPYRTVAEEYSLEYGNATVEIHTDAVRTGQRVLLVDDLIATGGTMVAAIKLLQRLGANVVEAAAIIDLPYIGGSQHIAETGTPLYTVCQFSATD</sequence>
<feature type="chain" id="PRO_1000000259" description="Adenine phosphoribosyltransferase">
    <location>
        <begin position="1"/>
        <end position="182"/>
    </location>
</feature>
<protein>
    <recommendedName>
        <fullName evidence="1">Adenine phosphoribosyltransferase</fullName>
        <shortName evidence="1">APRT</shortName>
        <ecNumber evidence="1">2.4.2.7</ecNumber>
    </recommendedName>
</protein>